<keyword id="KW-0808">Transferase</keyword>
<keyword id="KW-0819">tRNA processing</keyword>
<comment type="function">
    <text evidence="1">Catalyzes carboxymethyl transfer from carboxy-S-adenosyl-L-methionine (Cx-SAM) to 5-hydroxyuridine (ho5U) to form 5-carboxymethoxyuridine (cmo5U) at position 34 in tRNAs.</text>
</comment>
<comment type="catalytic activity">
    <reaction evidence="1">
        <text>carboxy-S-adenosyl-L-methionine + 5-hydroxyuridine(34) in tRNA = 5-carboxymethoxyuridine(34) in tRNA + S-adenosyl-L-homocysteine + H(+)</text>
        <dbReference type="Rhea" id="RHEA:52848"/>
        <dbReference type="Rhea" id="RHEA-COMP:13381"/>
        <dbReference type="Rhea" id="RHEA-COMP:13383"/>
        <dbReference type="ChEBI" id="CHEBI:15378"/>
        <dbReference type="ChEBI" id="CHEBI:57856"/>
        <dbReference type="ChEBI" id="CHEBI:134278"/>
        <dbReference type="ChEBI" id="CHEBI:136877"/>
        <dbReference type="ChEBI" id="CHEBI:136879"/>
    </reaction>
</comment>
<comment type="subunit">
    <text evidence="1">Homotetramer.</text>
</comment>
<comment type="similarity">
    <text evidence="1">Belongs to the class I-like SAM-binding methyltransferase superfamily. CmoB family.</text>
</comment>
<protein>
    <recommendedName>
        <fullName evidence="1">tRNA U34 carboxymethyltransferase</fullName>
        <ecNumber evidence="1">2.5.1.-</ecNumber>
    </recommendedName>
</protein>
<proteinExistence type="inferred from homology"/>
<name>CMOB_PSEPG</name>
<organism>
    <name type="scientific">Pseudomonas putida (strain GB-1)</name>
    <dbReference type="NCBI Taxonomy" id="76869"/>
    <lineage>
        <taxon>Bacteria</taxon>
        <taxon>Pseudomonadati</taxon>
        <taxon>Pseudomonadota</taxon>
        <taxon>Gammaproteobacteria</taxon>
        <taxon>Pseudomonadales</taxon>
        <taxon>Pseudomonadaceae</taxon>
        <taxon>Pseudomonas</taxon>
    </lineage>
</organism>
<gene>
    <name evidence="1" type="primary">cmoB</name>
    <name type="ordered locus">PputGB1_4367</name>
</gene>
<accession>B0KV20</accession>
<evidence type="ECO:0000255" key="1">
    <source>
        <dbReference type="HAMAP-Rule" id="MF_01590"/>
    </source>
</evidence>
<dbReference type="EC" id="2.5.1.-" evidence="1"/>
<dbReference type="EMBL" id="CP000926">
    <property type="protein sequence ID" value="ABZ00256.1"/>
    <property type="molecule type" value="Genomic_DNA"/>
</dbReference>
<dbReference type="RefSeq" id="WP_012273921.1">
    <property type="nucleotide sequence ID" value="NC_010322.1"/>
</dbReference>
<dbReference type="SMR" id="B0KV20"/>
<dbReference type="KEGG" id="ppg:PputGB1_4367"/>
<dbReference type="eggNOG" id="COG0500">
    <property type="taxonomic scope" value="Bacteria"/>
</dbReference>
<dbReference type="HOGENOM" id="CLU_052665_0_0_6"/>
<dbReference type="Proteomes" id="UP000002157">
    <property type="component" value="Chromosome"/>
</dbReference>
<dbReference type="GO" id="GO:0008168">
    <property type="term" value="F:methyltransferase activity"/>
    <property type="evidence" value="ECO:0007669"/>
    <property type="project" value="TreeGrafter"/>
</dbReference>
<dbReference type="GO" id="GO:0016765">
    <property type="term" value="F:transferase activity, transferring alkyl or aryl (other than methyl) groups"/>
    <property type="evidence" value="ECO:0007669"/>
    <property type="project" value="UniProtKB-UniRule"/>
</dbReference>
<dbReference type="GO" id="GO:0002098">
    <property type="term" value="P:tRNA wobble uridine modification"/>
    <property type="evidence" value="ECO:0007669"/>
    <property type="project" value="InterPro"/>
</dbReference>
<dbReference type="CDD" id="cd02440">
    <property type="entry name" value="AdoMet_MTases"/>
    <property type="match status" value="1"/>
</dbReference>
<dbReference type="Gene3D" id="3.40.50.150">
    <property type="entry name" value="Vaccinia Virus protein VP39"/>
    <property type="match status" value="1"/>
</dbReference>
<dbReference type="HAMAP" id="MF_01590">
    <property type="entry name" value="tRNA_carboxymethyltr_CmoB"/>
    <property type="match status" value="1"/>
</dbReference>
<dbReference type="InterPro" id="IPR010017">
    <property type="entry name" value="CmoB"/>
</dbReference>
<dbReference type="InterPro" id="IPR027555">
    <property type="entry name" value="Mo5U34_MeTrfas-like"/>
</dbReference>
<dbReference type="InterPro" id="IPR029063">
    <property type="entry name" value="SAM-dependent_MTases_sf"/>
</dbReference>
<dbReference type="NCBIfam" id="NF011650">
    <property type="entry name" value="PRK15068.1"/>
    <property type="match status" value="1"/>
</dbReference>
<dbReference type="NCBIfam" id="TIGR00452">
    <property type="entry name" value="tRNA 5-methoxyuridine(34)/uridine 5-oxyacetic acid(34) synthase CmoB"/>
    <property type="match status" value="1"/>
</dbReference>
<dbReference type="PANTHER" id="PTHR43464">
    <property type="entry name" value="METHYLTRANSFERASE"/>
    <property type="match status" value="1"/>
</dbReference>
<dbReference type="PANTHER" id="PTHR43464:SF95">
    <property type="entry name" value="TRNA U34 CARBOXYMETHYLTRANSFERASE"/>
    <property type="match status" value="1"/>
</dbReference>
<dbReference type="Pfam" id="PF08003">
    <property type="entry name" value="Methyltransf_9"/>
    <property type="match status" value="1"/>
</dbReference>
<dbReference type="SUPFAM" id="SSF53335">
    <property type="entry name" value="S-adenosyl-L-methionine-dependent methyltransferases"/>
    <property type="match status" value="1"/>
</dbReference>
<feature type="chain" id="PRO_1000087969" description="tRNA U34 carboxymethyltransferase">
    <location>
        <begin position="1"/>
        <end position="318"/>
    </location>
</feature>
<feature type="binding site" evidence="1">
    <location>
        <position position="88"/>
    </location>
    <ligand>
        <name>carboxy-S-adenosyl-L-methionine</name>
        <dbReference type="ChEBI" id="CHEBI:134278"/>
    </ligand>
</feature>
<feature type="binding site" evidence="1">
    <location>
        <position position="102"/>
    </location>
    <ligand>
        <name>carboxy-S-adenosyl-L-methionine</name>
        <dbReference type="ChEBI" id="CHEBI:134278"/>
    </ligand>
</feature>
<feature type="binding site" evidence="1">
    <location>
        <position position="107"/>
    </location>
    <ligand>
        <name>carboxy-S-adenosyl-L-methionine</name>
        <dbReference type="ChEBI" id="CHEBI:134278"/>
    </ligand>
</feature>
<feature type="binding site" evidence="1">
    <location>
        <position position="126"/>
    </location>
    <ligand>
        <name>carboxy-S-adenosyl-L-methionine</name>
        <dbReference type="ChEBI" id="CHEBI:134278"/>
    </ligand>
</feature>
<feature type="binding site" evidence="1">
    <location>
        <begin position="176"/>
        <end position="177"/>
    </location>
    <ligand>
        <name>carboxy-S-adenosyl-L-methionine</name>
        <dbReference type="ChEBI" id="CHEBI:134278"/>
    </ligand>
</feature>
<feature type="binding site" evidence="1">
    <location>
        <position position="192"/>
    </location>
    <ligand>
        <name>carboxy-S-adenosyl-L-methionine</name>
        <dbReference type="ChEBI" id="CHEBI:134278"/>
    </ligand>
</feature>
<feature type="binding site" evidence="1">
    <location>
        <position position="196"/>
    </location>
    <ligand>
        <name>carboxy-S-adenosyl-L-methionine</name>
        <dbReference type="ChEBI" id="CHEBI:134278"/>
    </ligand>
</feature>
<feature type="binding site" evidence="1">
    <location>
        <position position="311"/>
    </location>
    <ligand>
        <name>carboxy-S-adenosyl-L-methionine</name>
        <dbReference type="ChEBI" id="CHEBI:134278"/>
    </ligand>
</feature>
<sequence>MIDLSPLVRRLAGTPLASWSQGLQAQLEAKLEKGHGDLDRWRGALQALPTLQPSEIDLVNGLRLDCDCDDATRAQMRQALMGLSPWRKGPFDLFGVHVDTEWHSDWKWSRVSPHLNLKGKRVLDVGCGNGYYQWRMLGAGADMVIGVDPNWLFFCQFQAVQQYLPELPAWHLPFALEDLPANLEGFDTVFSMGVFYHRRSPIEHLLALKDCLVKGGELVLETLVIEGDENQVLVPEDRYAQMRNVWYLPSVPALARWLRRAGFSDVRCVDVSVTSVEEQRSTEWMRYQSLGDFLDPNDHSKTLEGLPAPRRATLLARK</sequence>
<reference key="1">
    <citation type="submission" date="2008-01" db="EMBL/GenBank/DDBJ databases">
        <title>Complete sequence of Pseudomonas putida GB-1.</title>
        <authorList>
            <consortium name="US DOE Joint Genome Institute"/>
            <person name="Copeland A."/>
            <person name="Lucas S."/>
            <person name="Lapidus A."/>
            <person name="Barry K."/>
            <person name="Glavina del Rio T."/>
            <person name="Dalin E."/>
            <person name="Tice H."/>
            <person name="Pitluck S."/>
            <person name="Bruce D."/>
            <person name="Goodwin L."/>
            <person name="Chertkov O."/>
            <person name="Brettin T."/>
            <person name="Detter J.C."/>
            <person name="Han C."/>
            <person name="Kuske C.R."/>
            <person name="Schmutz J."/>
            <person name="Larimer F."/>
            <person name="Land M."/>
            <person name="Hauser L."/>
            <person name="Kyrpides N."/>
            <person name="Kim E."/>
            <person name="McCarthy J.K."/>
            <person name="Richardson P."/>
        </authorList>
    </citation>
    <scope>NUCLEOTIDE SEQUENCE [LARGE SCALE GENOMIC DNA]</scope>
    <source>
        <strain>GB-1</strain>
    </source>
</reference>